<name>MMPL7_MYCTU</name>
<feature type="chain" id="PRO_0000103570" description="Phthiocerol dimycocerosate exporter MmpL7">
    <location>
        <begin position="1"/>
        <end position="920"/>
    </location>
</feature>
<feature type="transmembrane region" description="Helical" evidence="1">
    <location>
        <begin position="44"/>
        <end position="64"/>
    </location>
</feature>
<feature type="transmembrane region" description="Helical" evidence="1">
    <location>
        <begin position="210"/>
        <end position="230"/>
    </location>
</feature>
<feature type="transmembrane region" description="Helical" evidence="1">
    <location>
        <begin position="241"/>
        <end position="261"/>
    </location>
</feature>
<feature type="transmembrane region" description="Helical" evidence="1">
    <location>
        <begin position="271"/>
        <end position="291"/>
    </location>
</feature>
<feature type="transmembrane region" description="Helical" evidence="1">
    <location>
        <begin position="311"/>
        <end position="331"/>
    </location>
</feature>
<feature type="transmembrane region" description="Helical" evidence="1">
    <location>
        <begin position="344"/>
        <end position="364"/>
    </location>
</feature>
<feature type="transmembrane region" description="Helical" evidence="1">
    <location>
        <begin position="389"/>
        <end position="409"/>
    </location>
</feature>
<feature type="transmembrane region" description="Helical" evidence="1">
    <location>
        <begin position="761"/>
        <end position="781"/>
    </location>
</feature>
<feature type="transmembrane region" description="Helical" evidence="1">
    <location>
        <begin position="790"/>
        <end position="810"/>
    </location>
</feature>
<feature type="transmembrane region" description="Helical" evidence="1">
    <location>
        <begin position="822"/>
        <end position="842"/>
    </location>
</feature>
<feature type="transmembrane region" description="Helical" evidence="1">
    <location>
        <begin position="864"/>
        <end position="884"/>
    </location>
</feature>
<feature type="transmembrane region" description="Helical" evidence="1">
    <location>
        <begin position="888"/>
        <end position="908"/>
    </location>
</feature>
<feature type="mutagenesis site" description="Leads to decreased interaction with PpsE, but does not decrease MmpL7 activity in vivo." evidence="5">
    <original>I</original>
    <variation>S</variation>
    <location>
        <position position="611"/>
    </location>
</feature>
<proteinExistence type="evidence at protein level"/>
<keyword id="KW-0997">Cell inner membrane</keyword>
<keyword id="KW-1003">Cell membrane</keyword>
<keyword id="KW-0961">Cell wall biogenesis/degradation</keyword>
<keyword id="KW-0445">Lipid transport</keyword>
<keyword id="KW-0472">Membrane</keyword>
<keyword id="KW-0597">Phosphoprotein</keyword>
<keyword id="KW-1185">Reference proteome</keyword>
<keyword id="KW-0812">Transmembrane</keyword>
<keyword id="KW-1133">Transmembrane helix</keyword>
<keyword id="KW-0813">Transport</keyword>
<keyword id="KW-0843">Virulence</keyword>
<protein>
    <recommendedName>
        <fullName evidence="8">Phthiocerol dimycocerosate exporter MmpL7</fullName>
    </recommendedName>
</protein>
<evidence type="ECO:0000255" key="1"/>
<evidence type="ECO:0000269" key="2">
    <source>
    </source>
</evidence>
<evidence type="ECO:0000269" key="3">
    <source>
    </source>
</evidence>
<evidence type="ECO:0000269" key="4">
    <source>
    </source>
</evidence>
<evidence type="ECO:0000269" key="5">
    <source>
    </source>
</evidence>
<evidence type="ECO:0000269" key="6">
    <source>
    </source>
</evidence>
<evidence type="ECO:0000269" key="7">
    <source>
    </source>
</evidence>
<evidence type="ECO:0000305" key="8"/>
<evidence type="ECO:0000305" key="9">
    <source>
    </source>
</evidence>
<accession>P9WJU7</accession>
<accession>L0TB36</accession>
<accession>P65370</accession>
<accession>P96289</accession>
<reference key="1">
    <citation type="journal article" date="1998" name="Nature">
        <title>Deciphering the biology of Mycobacterium tuberculosis from the complete genome sequence.</title>
        <authorList>
            <person name="Cole S.T."/>
            <person name="Brosch R."/>
            <person name="Parkhill J."/>
            <person name="Garnier T."/>
            <person name="Churcher C.M."/>
            <person name="Harris D.E."/>
            <person name="Gordon S.V."/>
            <person name="Eiglmeier K."/>
            <person name="Gas S."/>
            <person name="Barry C.E. III"/>
            <person name="Tekaia F."/>
            <person name="Badcock K."/>
            <person name="Basham D."/>
            <person name="Brown D."/>
            <person name="Chillingworth T."/>
            <person name="Connor R."/>
            <person name="Davies R.M."/>
            <person name="Devlin K."/>
            <person name="Feltwell T."/>
            <person name="Gentles S."/>
            <person name="Hamlin N."/>
            <person name="Holroyd S."/>
            <person name="Hornsby T."/>
            <person name="Jagels K."/>
            <person name="Krogh A."/>
            <person name="McLean J."/>
            <person name="Moule S."/>
            <person name="Murphy L.D."/>
            <person name="Oliver S."/>
            <person name="Osborne J."/>
            <person name="Quail M.A."/>
            <person name="Rajandream M.A."/>
            <person name="Rogers J."/>
            <person name="Rutter S."/>
            <person name="Seeger K."/>
            <person name="Skelton S."/>
            <person name="Squares S."/>
            <person name="Squares R."/>
            <person name="Sulston J.E."/>
            <person name="Taylor K."/>
            <person name="Whitehead S."/>
            <person name="Barrell B.G."/>
        </authorList>
    </citation>
    <scope>NUCLEOTIDE SEQUENCE [LARGE SCALE GENOMIC DNA]</scope>
    <source>
        <strain>ATCC 25618 / H37Rv</strain>
    </source>
</reference>
<reference key="2">
    <citation type="journal article" date="1999" name="Nature">
        <title>Complex lipid determines tissue-specific replication of Mycobacterium tuberculosis in mice.</title>
        <authorList>
            <person name="Cox J.S."/>
            <person name="Chen B."/>
            <person name="McNeil M."/>
            <person name="Jacobs W.R. Jr."/>
        </authorList>
    </citation>
    <scope>FUNCTION</scope>
    <scope>DISRUPTION PHENOTYPE</scope>
</reference>
<reference key="3">
    <citation type="journal article" date="2001" name="J. Biol. Chem.">
        <title>Analysis of the phthiocerol dimycocerosate locus of Mycobacterium tuberculosis. Evidence that this lipid is involved in the cell wall permeability barrier.</title>
        <authorList>
            <person name="Camacho L.R."/>
            <person name="Constant P."/>
            <person name="Raynaud C."/>
            <person name="Laneelle M.A."/>
            <person name="Triccas J.A."/>
            <person name="Gicquel B."/>
            <person name="Daffe M."/>
            <person name="Guilhot C."/>
        </authorList>
    </citation>
    <scope>FUNCTION</scope>
    <scope>DISRUPTION PHENOTYPE</scope>
    <source>
        <strain>Mt103</strain>
    </source>
</reference>
<reference key="4">
    <citation type="journal article" date="2005" name="PLoS Pathog.">
        <title>Interaction between polyketide synthase and transporter suggests coupled synthesis and export of virulence lipid in M. tuberculosis.</title>
        <authorList>
            <person name="Jain M."/>
            <person name="Cox J.S."/>
        </authorList>
    </citation>
    <scope>INTERACTION WITH PPSE</scope>
    <scope>MUTAGENESIS OF ILE-611</scope>
</reference>
<reference key="5">
    <citation type="journal article" date="2005" name="Antimicrob. Agents Chemother.">
        <title>mmpL7 gene of Mycobacterium tuberculosis is responsible for isoniazid efflux in Mycobacterium smegmatis.</title>
        <authorList>
            <person name="Pasca M.R."/>
            <person name="Guglierame P."/>
            <person name="De Rossi E."/>
            <person name="Zara F."/>
            <person name="Riccardi G."/>
        </authorList>
    </citation>
    <scope>FUNCTION IN M.SMEGMATIS</scope>
</reference>
<reference key="6">
    <citation type="journal article" date="2005" name="Infect. Immun.">
        <title>Contribution of the Mycobacterium tuberculosis MmpL protein family to virulence and drug resistance.</title>
        <authorList>
            <person name="Domenech P."/>
            <person name="Reed M.B."/>
            <person name="Barry C.E. III"/>
        </authorList>
    </citation>
    <scope>FUNCTION IN VIRULENCE</scope>
    <scope>DISRUPTION PHENOTYPE</scope>
    <source>
        <strain>ATCC 25618 / H37Rv</strain>
    </source>
</reference>
<reference key="7">
    <citation type="journal article" date="2006" name="Biochem. Biophys. Res. Commun.">
        <title>Mycobacterium tuberculosis transporter MmpL7 is a potential substrate for kinase PknD.</title>
        <authorList>
            <person name="Perez J."/>
            <person name="Garcia R."/>
            <person name="Bach H."/>
            <person name="de Waard J.H."/>
            <person name="Jacobs W.R. Jr."/>
            <person name="Av-Gay Y."/>
            <person name="Bubis J."/>
            <person name="Takiff H.E."/>
        </authorList>
    </citation>
    <scope>PHOSPHORYLATION BY PKND</scope>
</reference>
<reference key="8">
    <citation type="journal article" date="2011" name="Mol. Cell. Proteomics">
        <title>Proteogenomic analysis of Mycobacterium tuberculosis by high resolution mass spectrometry.</title>
        <authorList>
            <person name="Kelkar D.S."/>
            <person name="Kumar D."/>
            <person name="Kumar P."/>
            <person name="Balakrishnan L."/>
            <person name="Muthusamy B."/>
            <person name="Yadav A.K."/>
            <person name="Shrivastava P."/>
            <person name="Marimuthu A."/>
            <person name="Anand S."/>
            <person name="Sundaram H."/>
            <person name="Kingsbury R."/>
            <person name="Harsha H.C."/>
            <person name="Nair B."/>
            <person name="Prasad T.S."/>
            <person name="Chauhan D.S."/>
            <person name="Katoch K."/>
            <person name="Katoch V.M."/>
            <person name="Kumar P."/>
            <person name="Chaerkady R."/>
            <person name="Ramachandran S."/>
            <person name="Dash D."/>
            <person name="Pandey A."/>
        </authorList>
    </citation>
    <scope>IDENTIFICATION BY MASS SPECTROMETRY [LARGE SCALE ANALYSIS]</scope>
    <source>
        <strain>ATCC 25618 / H37Rv</strain>
    </source>
</reference>
<comment type="function">
    <text evidence="2 3 4">Required for export of phthiocerol dimycocerosate (PDIM) to the cell wall (PubMed:10573420, PubMed:11279114). Essential for normal replication during the active-growth phase of the murine tuberculosis model (PubMed:15908378).</text>
</comment>
<comment type="function">
    <text evidence="6">Confers a high level of resistance to isoniazid (INH) when overexpressed in M.smegmatis.</text>
</comment>
<comment type="subunit">
    <text evidence="5">Interacts with PpsE.</text>
</comment>
<comment type="subcellular location">
    <subcellularLocation>
        <location evidence="9">Cell inner membrane</location>
        <topology evidence="1">Multi-pass membrane protein</topology>
    </subcellularLocation>
</comment>
<comment type="PTM">
    <text evidence="7">Phosphorylated by PknD in vitro. Phosphorylation could regulate the formation of the cell wall.</text>
</comment>
<comment type="disruption phenotype">
    <text evidence="2 3 4">Disruption causes altered colony morphology (PubMed:10573420). Inactivation increases mouse survival (PubMed:15908378). Mutants are unable to liberate PDIM into the culture medium and are compromised for growth in mouse lungs, but not in the liver or spleen (PubMed:10573420). DIM are found mostly in the cytosol and plasma membrane, and mutants exhibit higher cell wall permeability and are more sensitive to detergent (PubMed:11279114).</text>
</comment>
<comment type="similarity">
    <text evidence="8">Belongs to the resistance-nodulation-cell division (RND) (TC 2.A.6) family. MmpL subfamily.</text>
</comment>
<dbReference type="EMBL" id="AL123456">
    <property type="protein sequence ID" value="CCP45745.1"/>
    <property type="molecule type" value="Genomic_DNA"/>
</dbReference>
<dbReference type="PIR" id="C70668">
    <property type="entry name" value="C70668"/>
</dbReference>
<dbReference type="RefSeq" id="NP_217458.1">
    <property type="nucleotide sequence ID" value="NC_000962.3"/>
</dbReference>
<dbReference type="RefSeq" id="WP_003414861.1">
    <property type="nucleotide sequence ID" value="NZ_NVQJ01000015.1"/>
</dbReference>
<dbReference type="SMR" id="P9WJU7"/>
<dbReference type="STRING" id="83332.Rv2942"/>
<dbReference type="PaxDb" id="83332-Rv2942"/>
<dbReference type="GeneID" id="887548"/>
<dbReference type="KEGG" id="mtu:Rv2942"/>
<dbReference type="KEGG" id="mtv:RVBD_2942"/>
<dbReference type="TubercuList" id="Rv2942"/>
<dbReference type="eggNOG" id="COG2409">
    <property type="taxonomic scope" value="Bacteria"/>
</dbReference>
<dbReference type="InParanoid" id="P9WJU7"/>
<dbReference type="OrthoDB" id="4673837at2"/>
<dbReference type="PhylomeDB" id="P9WJU7"/>
<dbReference type="Reactome" id="R-MTU-9635470">
    <property type="pathway name" value="Dimycocersyl phthiocerol biosynthesis"/>
</dbReference>
<dbReference type="Proteomes" id="UP000001584">
    <property type="component" value="Chromosome"/>
</dbReference>
<dbReference type="GO" id="GO:0005886">
    <property type="term" value="C:plasma membrane"/>
    <property type="evidence" value="ECO:0007005"/>
    <property type="project" value="MTBBASE"/>
</dbReference>
<dbReference type="GO" id="GO:0015245">
    <property type="term" value="F:fatty acid transmembrane transporter activity"/>
    <property type="evidence" value="ECO:0000304"/>
    <property type="project" value="Reactome"/>
</dbReference>
<dbReference type="GO" id="GO:0071555">
    <property type="term" value="P:cell wall organization"/>
    <property type="evidence" value="ECO:0007669"/>
    <property type="project" value="UniProtKB-KW"/>
</dbReference>
<dbReference type="GO" id="GO:0008610">
    <property type="term" value="P:lipid biosynthetic process"/>
    <property type="evidence" value="ECO:0000304"/>
    <property type="project" value="Reactome"/>
</dbReference>
<dbReference type="GO" id="GO:0006869">
    <property type="term" value="P:lipid transport"/>
    <property type="evidence" value="ECO:0000315"/>
    <property type="project" value="MTBBASE"/>
</dbReference>
<dbReference type="GO" id="GO:0006855">
    <property type="term" value="P:xenobiotic transmembrane transport"/>
    <property type="evidence" value="ECO:0000315"/>
    <property type="project" value="MTBBASE"/>
</dbReference>
<dbReference type="InterPro" id="IPR004869">
    <property type="entry name" value="MMPL_dom"/>
</dbReference>
<dbReference type="InterPro" id="IPR050545">
    <property type="entry name" value="Mycobact_MmpL"/>
</dbReference>
<dbReference type="PANTHER" id="PTHR33406">
    <property type="entry name" value="MEMBRANE PROTEIN MJ1562-RELATED"/>
    <property type="match status" value="1"/>
</dbReference>
<dbReference type="PANTHER" id="PTHR33406:SF6">
    <property type="entry name" value="MEMBRANE PROTEIN YDGH-RELATED"/>
    <property type="match status" value="1"/>
</dbReference>
<dbReference type="Pfam" id="PF03176">
    <property type="entry name" value="MMPL"/>
    <property type="match status" value="2"/>
</dbReference>
<dbReference type="SUPFAM" id="SSF82866">
    <property type="entry name" value="Multidrug efflux transporter AcrB transmembrane domain"/>
    <property type="match status" value="1"/>
</dbReference>
<gene>
    <name type="primary">mmpL7</name>
    <name type="ordered locus">Rv2942</name>
    <name type="ORF">MTCY24G1.07c</name>
</gene>
<sequence>MPSPAGRLHRIRYIRLKKSSPDCRATITSGSADGQRRSPRLTNLLVVAAWVAAAVIANLLLTFTQAEPHDTSPALLPQDAKTAAATSRIAQAFPGTGSNAIAYLVVEGGSTLEPQDQPYYDAAVGALRADTRHVGSVLDWWSDPVTAPLGTSPDGRSATAMVWLRGEAGTTQAAESLDAVRSVLRQLPPSEGLRASIVVPAITNDMPMQITAWQSATIVTVAAVIAVLLLLRARLSVRAAAIVLLTADLSLAVAWPLAAVVRGHDWGTDSVFSWTLAAVLTIGTITAATMLAARLGSDAGHSAAPTYRDSLPAFALPGACVAIFTGPLLLARTPALHGVGTAGLGVFVALAASLTVLPALIALAGASRQLPAPTTGAGWTGRLSLPVSSASALGTAAVLAICMLPIIGMRWGVAENPTRQGGAQVLPGNALPDVVVIKSARDLRDPAALIAINQVSHRLVEVPGVRKVESAAWPAGVPWTDASLSSAAGRLADQLGQQAGSFVPAVTAIKSMKSIIEQMSGAVDQLDSTVNVTLAGARQAQQYLDPMLAAARNLKNKTTELSEYLETIHTWIVGFTNCPDDVLCTAMRKVIEPYDIVVTGMNELSTGADRISAISTQTMSALSSAPRMVAQMRSALAQVRSFVPKLETTIQDAMPQIAQASAMLKNLSADFADTGEGGFHLSRKDLADPSYRHVRESMFSSDGTATRLFLYSDGQLDLAAAARAQQLEIAAGKAMKYGSLVDSQVTVGGAAQIAAAVRDALIHDAVLLAVILLTVVALASMWRGAVHGAAVGVGVLASYLAALGVSIALWQHLLDRELNALVPLVSFAVLASCGVPYLVAGIKAGRIADEATGARSKGAVSGRGAVAPLAALGGVFGAGLVLVSGGSFSVLSQIGTVVVLGLGVLITVQRAWLPTTPGRR</sequence>
<organism>
    <name type="scientific">Mycobacterium tuberculosis (strain ATCC 25618 / H37Rv)</name>
    <dbReference type="NCBI Taxonomy" id="83332"/>
    <lineage>
        <taxon>Bacteria</taxon>
        <taxon>Bacillati</taxon>
        <taxon>Actinomycetota</taxon>
        <taxon>Actinomycetes</taxon>
        <taxon>Mycobacteriales</taxon>
        <taxon>Mycobacteriaceae</taxon>
        <taxon>Mycobacterium</taxon>
        <taxon>Mycobacterium tuberculosis complex</taxon>
    </lineage>
</organism>